<proteinExistence type="inferred from homology"/>
<accession>C1EQQ8</accession>
<evidence type="ECO:0000255" key="1">
    <source>
        <dbReference type="HAMAP-Rule" id="MF_01683"/>
    </source>
</evidence>
<feature type="chain" id="PRO_1000187400" description="Methylthioribose kinase">
    <location>
        <begin position="1"/>
        <end position="393"/>
    </location>
</feature>
<feature type="binding site" evidence="1">
    <location>
        <position position="38"/>
    </location>
    <ligand>
        <name>ATP</name>
        <dbReference type="ChEBI" id="CHEBI:30616"/>
    </ligand>
</feature>
<feature type="binding site" evidence="1">
    <location>
        <position position="53"/>
    </location>
    <ligand>
        <name>ATP</name>
        <dbReference type="ChEBI" id="CHEBI:30616"/>
    </ligand>
</feature>
<feature type="binding site" evidence="1">
    <location>
        <begin position="107"/>
        <end position="109"/>
    </location>
    <ligand>
        <name>ATP</name>
        <dbReference type="ChEBI" id="CHEBI:30616"/>
    </ligand>
</feature>
<feature type="binding site" evidence="1">
    <location>
        <position position="225"/>
    </location>
    <ligand>
        <name>substrate</name>
    </ligand>
</feature>
<feature type="binding site" evidence="1">
    <location>
        <begin position="242"/>
        <end position="244"/>
    </location>
    <ligand>
        <name>ATP</name>
        <dbReference type="ChEBI" id="CHEBI:30616"/>
    </ligand>
</feature>
<feature type="binding site" evidence="1">
    <location>
        <position position="332"/>
    </location>
    <ligand>
        <name>substrate</name>
    </ligand>
</feature>
<gene>
    <name evidence="1" type="primary">mtnK</name>
    <name type="ordered locus">BCA_4144</name>
</gene>
<name>MTNK_BACC3</name>
<comment type="function">
    <text evidence="1">Catalyzes the phosphorylation of methylthioribose into methylthioribose-1-phosphate.</text>
</comment>
<comment type="catalytic activity">
    <reaction evidence="1">
        <text>5-(methylsulfanyl)-D-ribose + ATP = 5-(methylsulfanyl)-alpha-D-ribose 1-phosphate + ADP + H(+)</text>
        <dbReference type="Rhea" id="RHEA:22312"/>
        <dbReference type="ChEBI" id="CHEBI:15378"/>
        <dbReference type="ChEBI" id="CHEBI:30616"/>
        <dbReference type="ChEBI" id="CHEBI:58533"/>
        <dbReference type="ChEBI" id="CHEBI:78440"/>
        <dbReference type="ChEBI" id="CHEBI:456216"/>
        <dbReference type="EC" id="2.7.1.100"/>
    </reaction>
</comment>
<comment type="pathway">
    <text evidence="1">Amino-acid biosynthesis; L-methionine biosynthesis via salvage pathway; S-methyl-5-thio-alpha-D-ribose 1-phosphate from S-methyl-5'-thioadenosine (hydrolase route): step 2/2.</text>
</comment>
<comment type="subunit">
    <text evidence="1">Homodimer.</text>
</comment>
<comment type="similarity">
    <text evidence="1">Belongs to the methylthioribose kinase family.</text>
</comment>
<protein>
    <recommendedName>
        <fullName evidence="1">Methylthioribose kinase</fullName>
        <shortName evidence="1">MTR kinase</shortName>
        <ecNumber evidence="1">2.7.1.100</ecNumber>
    </recommendedName>
</protein>
<dbReference type="EC" id="2.7.1.100" evidence="1"/>
<dbReference type="EMBL" id="CP001407">
    <property type="protein sequence ID" value="ACO28697.1"/>
    <property type="molecule type" value="Genomic_DNA"/>
</dbReference>
<dbReference type="RefSeq" id="WP_000542713.1">
    <property type="nucleotide sequence ID" value="NC_012472.1"/>
</dbReference>
<dbReference type="SMR" id="C1EQQ8"/>
<dbReference type="KEGG" id="bcx:BCA_4144"/>
<dbReference type="PATRIC" id="fig|572264.18.peg.4096"/>
<dbReference type="UniPathway" id="UPA00904">
    <property type="reaction ID" value="UER00872"/>
</dbReference>
<dbReference type="Proteomes" id="UP000002210">
    <property type="component" value="Chromosome"/>
</dbReference>
<dbReference type="GO" id="GO:0005524">
    <property type="term" value="F:ATP binding"/>
    <property type="evidence" value="ECO:0007669"/>
    <property type="project" value="UniProtKB-UniRule"/>
</dbReference>
<dbReference type="GO" id="GO:0046522">
    <property type="term" value="F:S-methyl-5-thioribose kinase activity"/>
    <property type="evidence" value="ECO:0007669"/>
    <property type="project" value="UniProtKB-UniRule"/>
</dbReference>
<dbReference type="GO" id="GO:0019509">
    <property type="term" value="P:L-methionine salvage from methylthioadenosine"/>
    <property type="evidence" value="ECO:0007669"/>
    <property type="project" value="UniProtKB-UniRule"/>
</dbReference>
<dbReference type="FunFam" id="3.30.200.20:FF:000436">
    <property type="entry name" value="Methylthioribose kinase"/>
    <property type="match status" value="1"/>
</dbReference>
<dbReference type="FunFam" id="3.90.1200.10:FF:000008">
    <property type="entry name" value="Methylthioribose kinase"/>
    <property type="match status" value="1"/>
</dbReference>
<dbReference type="Gene3D" id="3.90.1200.10">
    <property type="match status" value="1"/>
</dbReference>
<dbReference type="Gene3D" id="3.30.200.20">
    <property type="entry name" value="Phosphorylase Kinase, domain 1"/>
    <property type="match status" value="1"/>
</dbReference>
<dbReference type="HAMAP" id="MF_01683">
    <property type="entry name" value="Salvage_MtnK"/>
    <property type="match status" value="1"/>
</dbReference>
<dbReference type="InterPro" id="IPR002575">
    <property type="entry name" value="Aminoglycoside_PTrfase"/>
</dbReference>
<dbReference type="InterPro" id="IPR011009">
    <property type="entry name" value="Kinase-like_dom_sf"/>
</dbReference>
<dbReference type="InterPro" id="IPR009212">
    <property type="entry name" value="Methylthioribose_kinase"/>
</dbReference>
<dbReference type="NCBIfam" id="TIGR01767">
    <property type="entry name" value="MTRK"/>
    <property type="match status" value="1"/>
</dbReference>
<dbReference type="PANTHER" id="PTHR34273">
    <property type="entry name" value="METHYLTHIORIBOSE KINASE"/>
    <property type="match status" value="1"/>
</dbReference>
<dbReference type="PANTHER" id="PTHR34273:SF2">
    <property type="entry name" value="METHYLTHIORIBOSE KINASE"/>
    <property type="match status" value="1"/>
</dbReference>
<dbReference type="Pfam" id="PF01636">
    <property type="entry name" value="APH"/>
    <property type="match status" value="1"/>
</dbReference>
<dbReference type="PIRSF" id="PIRSF031134">
    <property type="entry name" value="MTRK"/>
    <property type="match status" value="1"/>
</dbReference>
<dbReference type="SUPFAM" id="SSF56112">
    <property type="entry name" value="Protein kinase-like (PK-like)"/>
    <property type="match status" value="1"/>
</dbReference>
<reference key="1">
    <citation type="submission" date="2009-02" db="EMBL/GenBank/DDBJ databases">
        <title>Genome sequence of Bacillus cereus 03BB102.</title>
        <authorList>
            <person name="Dodson R.J."/>
            <person name="Jackson P."/>
            <person name="Munk A.C."/>
            <person name="Brettin T."/>
            <person name="Bruce D."/>
            <person name="Detter C."/>
            <person name="Tapia R."/>
            <person name="Han C."/>
            <person name="Sutton G."/>
            <person name="Sims D."/>
        </authorList>
    </citation>
    <scope>NUCLEOTIDE SEQUENCE [LARGE SCALE GENOMIC DNA]</scope>
    <source>
        <strain>03BB102</strain>
    </source>
</reference>
<sequence>MGYYSLTEVTAVQYAKEHGYFEKKANVVCHEIGDGNLNYVFKLDDGEKSIIIKQALPYAKVVGESWPLSIKRATIESKALQIFAKYVPEYVPVVYSHDEELAVTVIEDLSRLTITRKGLIDGEEYPLLSQHIGRFLANVLFYTSDFGLQSEEKRVLEGTFVNPDLCKITEDLVFTDPFGHYDTNDYEPELQLTIDELWSDKTLKLKVAQYKYKFLTRKEALIHGDLHTGSIFSSPSETKVIDPEFATYGPFGFDIGQFIANLLLNALSREEEQRGVLFFHIEKTWSYFVETFTKLWIGEGVEAYTKEKQWLPIILQNIFTDTVGFAGCELIRRTIGLAHVADLDEITNKETRIQAKKQALSLGKELIKYESKNADIQLFRTLFQQTVSGGIKA</sequence>
<organism>
    <name type="scientific">Bacillus cereus (strain 03BB102)</name>
    <dbReference type="NCBI Taxonomy" id="572264"/>
    <lineage>
        <taxon>Bacteria</taxon>
        <taxon>Bacillati</taxon>
        <taxon>Bacillota</taxon>
        <taxon>Bacilli</taxon>
        <taxon>Bacillales</taxon>
        <taxon>Bacillaceae</taxon>
        <taxon>Bacillus</taxon>
        <taxon>Bacillus cereus group</taxon>
    </lineage>
</organism>
<keyword id="KW-0028">Amino-acid biosynthesis</keyword>
<keyword id="KW-0067">ATP-binding</keyword>
<keyword id="KW-0418">Kinase</keyword>
<keyword id="KW-0486">Methionine biosynthesis</keyword>
<keyword id="KW-0547">Nucleotide-binding</keyword>
<keyword id="KW-0808">Transferase</keyword>